<evidence type="ECO:0000250" key="1"/>
<evidence type="ECO:0000305" key="2"/>
<feature type="initiator methionine" description="Removed" evidence="1">
    <location>
        <position position="1"/>
    </location>
</feature>
<feature type="chain" id="PRO_0000182563" description="Flagellin">
    <location>
        <begin position="2"/>
        <end position="508"/>
    </location>
</feature>
<comment type="function">
    <text>Flagellin is the subunit protein which polymerizes to form the filaments of bacterial flagella.</text>
</comment>
<comment type="subcellular location">
    <subcellularLocation>
        <location>Secreted</location>
    </subcellularLocation>
    <subcellularLocation>
        <location>Bacterial flagellum</location>
    </subcellularLocation>
</comment>
<comment type="miscellaneous">
    <text>Individual Salmonella serotypes usually alternate between the production of 2 antigenic forms of flagella, termed phase 1 and phase 2, each specified by separate structural genes.</text>
</comment>
<comment type="similarity">
    <text evidence="2">Belongs to the bacterial flagellin family.</text>
</comment>
<keyword id="KW-0975">Bacterial flagellum</keyword>
<keyword id="KW-0964">Secreted</keyword>
<gene>
    <name type="primary">fliC</name>
</gene>
<accession>Q06968</accession>
<proteinExistence type="inferred from homology"/>
<organism>
    <name type="scientific">Salmonella berta</name>
    <dbReference type="NCBI Taxonomy" id="28142"/>
    <lineage>
        <taxon>Bacteria</taxon>
        <taxon>Pseudomonadati</taxon>
        <taxon>Pseudomonadota</taxon>
        <taxon>Gammaproteobacteria</taxon>
        <taxon>Enterobacterales</taxon>
        <taxon>Enterobacteriaceae</taxon>
        <taxon>Salmonella</taxon>
    </lineage>
</organism>
<name>FLIC_SALBE</name>
<reference key="1">
    <citation type="journal article" date="1994" name="Proc. Natl. Acad. Sci. U.S.A.">
        <title>Recombinational basis of serovar diversity in Salmonella enterica.</title>
        <authorList>
            <person name="Li J."/>
            <person name="Nelson K."/>
            <person name="McWhorter A.C."/>
            <person name="Whittam T.S."/>
            <person name="Selander R.K."/>
        </authorList>
    </citation>
    <scope>NUCLEOTIDE SEQUENCE [GENOMIC DNA]</scope>
    <source>
        <strain>S5321</strain>
    </source>
</reference>
<reference key="2">
    <citation type="journal article" date="1993" name="J. Bacteriol.">
        <title>Molecular analyses of the Salmonella g. flagellar antigen complex.</title>
        <authorList>
            <person name="Masten B.J."/>
            <person name="Joys T.M."/>
        </authorList>
    </citation>
    <scope>NUCLEOTIDE SEQUENCE [GENOMIC DNA]</scope>
    <source>
        <strain>ATCC 8392</strain>
    </source>
</reference>
<protein>
    <recommendedName>
        <fullName>Flagellin</fullName>
    </recommendedName>
    <alternativeName>
        <fullName>Phase 1-I flagellin</fullName>
    </alternativeName>
</protein>
<sequence>MAQVINTNSLSLLTQNNLNKSQSSLSSAIERLSSGLRINSAKDDAAGQAIANRFTSNIKGLTQASRNANDGISIAQTTEGALNEINNNLQRVRELSVQATNGTNSDSDLKSIQDEIQQRLEEIDRVSNQTQFNGVKVLSQDNQMKIQVGANDGETITIDLQKIDVKSLGLDGFNVNGPKEATVGDLKSSFKNVTGYDTYAVGANKYRVDVNSGAVVTDTTAPTVPDKVYVNAANGQLTTDDAENNTAVDLFKTTKSTAGTAEAKAIAGAIKGGKEGDTFDYKGVTFTIDTKTGNDGNGKVSTTINGEKVTLTVADITAGAANVDAATLQSSKNVYTSVVNGQFTFDDKTKNESAKLSDLEANNAVKGESKITVNGAEYTANAAGDKVTLAGKTMFIDKTASGVSTLINEDAAAAKKSTANPLASIDSALSKVDAVRSSLGAIQNRFDSAITNLGNTVTNLNSARSRIEDADYATEVSNMSKAQILQQAGTSVLAQANQVPQNVLSLLR</sequence>
<dbReference type="EMBL" id="U06227">
    <property type="protein sequence ID" value="AAA17868.1"/>
    <property type="molecule type" value="Unassigned_DNA"/>
</dbReference>
<dbReference type="EMBL" id="Z15064">
    <property type="protein sequence ID" value="CAA78773.1"/>
    <property type="molecule type" value="Genomic_DNA"/>
</dbReference>
<dbReference type="PIR" id="S33185">
    <property type="entry name" value="S33185"/>
</dbReference>
<dbReference type="RefSeq" id="WP_023238124.1">
    <property type="nucleotide sequence ID" value="NZ_MYTZ01000002.1"/>
</dbReference>
<dbReference type="SMR" id="Q06968"/>
<dbReference type="PATRIC" id="fig|28142.5.peg.3570"/>
<dbReference type="GO" id="GO:0009288">
    <property type="term" value="C:bacterial-type flagellum"/>
    <property type="evidence" value="ECO:0007669"/>
    <property type="project" value="UniProtKB-SubCell"/>
</dbReference>
<dbReference type="GO" id="GO:0005576">
    <property type="term" value="C:extracellular region"/>
    <property type="evidence" value="ECO:0007669"/>
    <property type="project" value="UniProtKB-SubCell"/>
</dbReference>
<dbReference type="GO" id="GO:0005198">
    <property type="term" value="F:structural molecule activity"/>
    <property type="evidence" value="ECO:0007669"/>
    <property type="project" value="InterPro"/>
</dbReference>
<dbReference type="Gene3D" id="6.10.280.190">
    <property type="match status" value="1"/>
</dbReference>
<dbReference type="Gene3D" id="2.30.220.10">
    <property type="entry name" value="f41 fragment of flagellin, C-terminal domain"/>
    <property type="match status" value="1"/>
</dbReference>
<dbReference type="Gene3D" id="2.170.280.10">
    <property type="entry name" value="f41 fragment of flagellin, middle domain"/>
    <property type="match status" value="1"/>
</dbReference>
<dbReference type="Gene3D" id="1.20.1330.10">
    <property type="entry name" value="f41 fragment of flagellin, N-terminal domain"/>
    <property type="match status" value="1"/>
</dbReference>
<dbReference type="Gene3D" id="6.10.10.10">
    <property type="entry name" value="Flagellar export chaperone, C-terminal domain"/>
    <property type="match status" value="1"/>
</dbReference>
<dbReference type="InterPro" id="IPR001492">
    <property type="entry name" value="Flagellin"/>
</dbReference>
<dbReference type="InterPro" id="IPR046358">
    <property type="entry name" value="Flagellin_C"/>
</dbReference>
<dbReference type="InterPro" id="IPR042187">
    <property type="entry name" value="Flagellin_C_sub2"/>
</dbReference>
<dbReference type="InterPro" id="IPR001029">
    <property type="entry name" value="Flagellin_N"/>
</dbReference>
<dbReference type="PANTHER" id="PTHR42792">
    <property type="entry name" value="FLAGELLIN"/>
    <property type="match status" value="1"/>
</dbReference>
<dbReference type="PANTHER" id="PTHR42792:SF2">
    <property type="entry name" value="FLAGELLIN"/>
    <property type="match status" value="1"/>
</dbReference>
<dbReference type="Pfam" id="PF00700">
    <property type="entry name" value="Flagellin_C"/>
    <property type="match status" value="1"/>
</dbReference>
<dbReference type="Pfam" id="PF00669">
    <property type="entry name" value="Flagellin_N"/>
    <property type="match status" value="1"/>
</dbReference>
<dbReference type="Pfam" id="PF22370">
    <property type="entry name" value="FliC-like_3rd"/>
    <property type="match status" value="1"/>
</dbReference>
<dbReference type="PRINTS" id="PR00207">
    <property type="entry name" value="FLAGELLIN"/>
</dbReference>
<dbReference type="SUPFAM" id="SSF64518">
    <property type="entry name" value="Phase 1 flagellin"/>
    <property type="match status" value="1"/>
</dbReference>